<dbReference type="EMBL" id="CP000860">
    <property type="protein sequence ID" value="ACA60719.1"/>
    <property type="molecule type" value="Genomic_DNA"/>
</dbReference>
<dbReference type="RefSeq" id="WP_012303293.1">
    <property type="nucleotide sequence ID" value="NC_010424.1"/>
</dbReference>
<dbReference type="SMR" id="B1I6S1"/>
<dbReference type="STRING" id="477974.Daud_2232"/>
<dbReference type="KEGG" id="dau:Daud_2232"/>
<dbReference type="eggNOG" id="COG0445">
    <property type="taxonomic scope" value="Bacteria"/>
</dbReference>
<dbReference type="HOGENOM" id="CLU_007831_2_2_9"/>
<dbReference type="OrthoDB" id="9815560at2"/>
<dbReference type="Proteomes" id="UP000008544">
    <property type="component" value="Chromosome"/>
</dbReference>
<dbReference type="GO" id="GO:0005829">
    <property type="term" value="C:cytosol"/>
    <property type="evidence" value="ECO:0007669"/>
    <property type="project" value="TreeGrafter"/>
</dbReference>
<dbReference type="GO" id="GO:0050660">
    <property type="term" value="F:flavin adenine dinucleotide binding"/>
    <property type="evidence" value="ECO:0007669"/>
    <property type="project" value="UniProtKB-UniRule"/>
</dbReference>
<dbReference type="GO" id="GO:0030488">
    <property type="term" value="P:tRNA methylation"/>
    <property type="evidence" value="ECO:0007669"/>
    <property type="project" value="TreeGrafter"/>
</dbReference>
<dbReference type="GO" id="GO:0002098">
    <property type="term" value="P:tRNA wobble uridine modification"/>
    <property type="evidence" value="ECO:0007669"/>
    <property type="project" value="InterPro"/>
</dbReference>
<dbReference type="FunFam" id="1.10.10.1800:FF:000001">
    <property type="entry name" value="tRNA uridine 5-carboxymethylaminomethyl modification enzyme MnmG"/>
    <property type="match status" value="1"/>
</dbReference>
<dbReference type="FunFam" id="1.10.150.570:FF:000001">
    <property type="entry name" value="tRNA uridine 5-carboxymethylaminomethyl modification enzyme MnmG"/>
    <property type="match status" value="1"/>
</dbReference>
<dbReference type="FunFam" id="3.50.50.60:FF:000002">
    <property type="entry name" value="tRNA uridine 5-carboxymethylaminomethyl modification enzyme MnmG"/>
    <property type="match status" value="1"/>
</dbReference>
<dbReference type="Gene3D" id="3.50.50.60">
    <property type="entry name" value="FAD/NAD(P)-binding domain"/>
    <property type="match status" value="2"/>
</dbReference>
<dbReference type="Gene3D" id="1.10.150.570">
    <property type="entry name" value="GidA associated domain, C-terminal subdomain"/>
    <property type="match status" value="1"/>
</dbReference>
<dbReference type="Gene3D" id="1.10.10.1800">
    <property type="entry name" value="tRNA uridine 5-carboxymethylaminomethyl modification enzyme MnmG/GidA"/>
    <property type="match status" value="1"/>
</dbReference>
<dbReference type="HAMAP" id="MF_00129">
    <property type="entry name" value="MnmG_GidA"/>
    <property type="match status" value="1"/>
</dbReference>
<dbReference type="InterPro" id="IPR036188">
    <property type="entry name" value="FAD/NAD-bd_sf"/>
</dbReference>
<dbReference type="InterPro" id="IPR049312">
    <property type="entry name" value="GIDA_C_N"/>
</dbReference>
<dbReference type="InterPro" id="IPR004416">
    <property type="entry name" value="MnmG"/>
</dbReference>
<dbReference type="InterPro" id="IPR002218">
    <property type="entry name" value="MnmG-rel"/>
</dbReference>
<dbReference type="InterPro" id="IPR020595">
    <property type="entry name" value="MnmG-rel_CS"/>
</dbReference>
<dbReference type="InterPro" id="IPR026904">
    <property type="entry name" value="MnmG_C"/>
</dbReference>
<dbReference type="InterPro" id="IPR047001">
    <property type="entry name" value="MnmG_C_subdom"/>
</dbReference>
<dbReference type="InterPro" id="IPR044920">
    <property type="entry name" value="MnmG_C_subdom_sf"/>
</dbReference>
<dbReference type="InterPro" id="IPR040131">
    <property type="entry name" value="MnmG_N"/>
</dbReference>
<dbReference type="NCBIfam" id="TIGR00136">
    <property type="entry name" value="mnmG_gidA"/>
    <property type="match status" value="1"/>
</dbReference>
<dbReference type="PANTHER" id="PTHR11806">
    <property type="entry name" value="GLUCOSE INHIBITED DIVISION PROTEIN A"/>
    <property type="match status" value="1"/>
</dbReference>
<dbReference type="PANTHER" id="PTHR11806:SF0">
    <property type="entry name" value="PROTEIN MTO1 HOMOLOG, MITOCHONDRIAL"/>
    <property type="match status" value="1"/>
</dbReference>
<dbReference type="Pfam" id="PF01134">
    <property type="entry name" value="GIDA"/>
    <property type="match status" value="1"/>
</dbReference>
<dbReference type="Pfam" id="PF21680">
    <property type="entry name" value="GIDA_C_1st"/>
    <property type="match status" value="1"/>
</dbReference>
<dbReference type="Pfam" id="PF13932">
    <property type="entry name" value="SAM_GIDA_C"/>
    <property type="match status" value="1"/>
</dbReference>
<dbReference type="PRINTS" id="PR00368">
    <property type="entry name" value="FADPNR"/>
</dbReference>
<dbReference type="PRINTS" id="PR00411">
    <property type="entry name" value="PNDRDTASEI"/>
</dbReference>
<dbReference type="SMART" id="SM01228">
    <property type="entry name" value="GIDA_assoc_3"/>
    <property type="match status" value="1"/>
</dbReference>
<dbReference type="SUPFAM" id="SSF51905">
    <property type="entry name" value="FAD/NAD(P)-binding domain"/>
    <property type="match status" value="1"/>
</dbReference>
<dbReference type="PROSITE" id="PS01280">
    <property type="entry name" value="GIDA_1"/>
    <property type="match status" value="1"/>
</dbReference>
<dbReference type="PROSITE" id="PS01281">
    <property type="entry name" value="GIDA_2"/>
    <property type="match status" value="1"/>
</dbReference>
<organism>
    <name type="scientific">Desulforudis audaxviator (strain MP104C)</name>
    <dbReference type="NCBI Taxonomy" id="477974"/>
    <lineage>
        <taxon>Bacteria</taxon>
        <taxon>Bacillati</taxon>
        <taxon>Bacillota</taxon>
        <taxon>Clostridia</taxon>
        <taxon>Thermoanaerobacterales</taxon>
        <taxon>Candidatus Desulforudaceae</taxon>
        <taxon>Candidatus Desulforudis</taxon>
    </lineage>
</organism>
<name>MNMG_DESAP</name>
<sequence length="657" mass="71825">MEYTAGKYDVIVVGGGHAGCEAALASARLGCRTLLLTLSIDFVALMPCNPAIGGPGKSHLVREIDALGGEMGRNTDRAAIQVRMLNTGKGPAVRALRAQTDKRLYQEGMRRTVEGQPLLDLKQAMVEKIIVDGGSARGVVTRTGARFLAPAVIVTTGTYLRSRVLVGETSFESGPNGQFPAVGLAANLRENGFELGRFKTGTPPRIDRRTLDFSRMTPQHGDEDCPGFSFAAGNRGKEQIQVPCWLTYTTARTHEIIRENLDRSPLYTGIIQGTGPRYCPSIEDKVVRFADRERHQVFVEPEGLHTNEMYVQGMSTSLPEDVQLLLLRSLPGLEKVEIVRYGYAIEYDYVVPTQLAPTLETKAVSGLFLAGQINGTSGYEEAAAQGIVAGINAAQSVKNGEPLVVSRAQAYIGVLIDDLVTKGTREPYRIFTSRAEYRLALRQDNADLRLTERAHRIGLVSGAHYERFAQKKDRVRAELERLDRTVVPDPLGRVSRAEVQDWLAARGSAPLSRPCRLSELLRRPEIRYADLVGLGVADPDVAPDVAAEVENQIKYAGYIQKQAAQVARFEKLEARRIPADLDYSEVRGLSNEAAQKLAEIRPVSVGQAGRISGVSPADIAVLLVYLEKRRRREEESDGSRIGHLPSERSGELGSGTG</sequence>
<evidence type="ECO:0000255" key="1">
    <source>
        <dbReference type="HAMAP-Rule" id="MF_00129"/>
    </source>
</evidence>
<evidence type="ECO:0000256" key="2">
    <source>
        <dbReference type="SAM" id="MobiDB-lite"/>
    </source>
</evidence>
<gene>
    <name evidence="1" type="primary">mnmG</name>
    <name evidence="1" type="synonym">gidA</name>
    <name type="ordered locus">Daud_2232</name>
</gene>
<protein>
    <recommendedName>
        <fullName evidence="1">tRNA uridine 5-carboxymethylaminomethyl modification enzyme MnmG</fullName>
    </recommendedName>
    <alternativeName>
        <fullName evidence="1">Glucose-inhibited division protein A</fullName>
    </alternativeName>
</protein>
<reference key="1">
    <citation type="submission" date="2007-10" db="EMBL/GenBank/DDBJ databases">
        <title>Complete sequence of chromosome of Desulforudis audaxviator MP104C.</title>
        <authorList>
            <person name="Copeland A."/>
            <person name="Lucas S."/>
            <person name="Lapidus A."/>
            <person name="Barry K."/>
            <person name="Glavina del Rio T."/>
            <person name="Dalin E."/>
            <person name="Tice H."/>
            <person name="Bruce D."/>
            <person name="Pitluck S."/>
            <person name="Lowry S.R."/>
            <person name="Larimer F."/>
            <person name="Land M.L."/>
            <person name="Hauser L."/>
            <person name="Kyrpides N."/>
            <person name="Ivanova N.N."/>
            <person name="Richardson P."/>
        </authorList>
    </citation>
    <scope>NUCLEOTIDE SEQUENCE [LARGE SCALE GENOMIC DNA]</scope>
    <source>
        <strain>MP104C</strain>
    </source>
</reference>
<proteinExistence type="inferred from homology"/>
<feature type="chain" id="PRO_0000345263" description="tRNA uridine 5-carboxymethylaminomethyl modification enzyme MnmG">
    <location>
        <begin position="1"/>
        <end position="657"/>
    </location>
</feature>
<feature type="region of interest" description="Disordered" evidence="2">
    <location>
        <begin position="632"/>
        <end position="657"/>
    </location>
</feature>
<feature type="compositionally biased region" description="Basic and acidic residues" evidence="2">
    <location>
        <begin position="632"/>
        <end position="650"/>
    </location>
</feature>
<feature type="binding site" evidence="1">
    <location>
        <begin position="14"/>
        <end position="19"/>
    </location>
    <ligand>
        <name>FAD</name>
        <dbReference type="ChEBI" id="CHEBI:57692"/>
    </ligand>
</feature>
<feature type="binding site" evidence="1">
    <location>
        <begin position="275"/>
        <end position="289"/>
    </location>
    <ligand>
        <name>NAD(+)</name>
        <dbReference type="ChEBI" id="CHEBI:57540"/>
    </ligand>
</feature>
<accession>B1I6S1</accession>
<keyword id="KW-0963">Cytoplasm</keyword>
<keyword id="KW-0274">FAD</keyword>
<keyword id="KW-0285">Flavoprotein</keyword>
<keyword id="KW-0520">NAD</keyword>
<keyword id="KW-1185">Reference proteome</keyword>
<keyword id="KW-0819">tRNA processing</keyword>
<comment type="function">
    <text evidence="1">NAD-binding protein involved in the addition of a carboxymethylaminomethyl (cmnm) group at the wobble position (U34) of certain tRNAs, forming tRNA-cmnm(5)s(2)U34.</text>
</comment>
<comment type="cofactor">
    <cofactor evidence="1">
        <name>FAD</name>
        <dbReference type="ChEBI" id="CHEBI:57692"/>
    </cofactor>
</comment>
<comment type="subunit">
    <text evidence="1">Homodimer. Heterotetramer of two MnmE and two MnmG subunits.</text>
</comment>
<comment type="subcellular location">
    <subcellularLocation>
        <location evidence="1">Cytoplasm</location>
    </subcellularLocation>
</comment>
<comment type="similarity">
    <text evidence="1">Belongs to the MnmG family.</text>
</comment>